<gene>
    <name evidence="1" type="primary">dtdA</name>
    <name type="ordered locus">Msed_0774</name>
</gene>
<organism>
    <name type="scientific">Metallosphaera sedula (strain ATCC 51363 / DSM 5348 / JCM 9185 / NBRC 15509 / TH2)</name>
    <dbReference type="NCBI Taxonomy" id="399549"/>
    <lineage>
        <taxon>Archaea</taxon>
        <taxon>Thermoproteota</taxon>
        <taxon>Thermoprotei</taxon>
        <taxon>Sulfolobales</taxon>
        <taxon>Sulfolobaceae</taxon>
        <taxon>Metallosphaera</taxon>
    </lineage>
</organism>
<reference key="1">
    <citation type="journal article" date="2008" name="Appl. Environ. Microbiol.">
        <title>The genome sequence of the metal-mobilizing, extremely thermoacidophilic archaeon Metallosphaera sedula provides insights into bioleaching-associated metabolism.</title>
        <authorList>
            <person name="Auernik K.S."/>
            <person name="Maezato Y."/>
            <person name="Blum P.H."/>
            <person name="Kelly R.M."/>
        </authorList>
    </citation>
    <scope>NUCLEOTIDE SEQUENCE [LARGE SCALE GENOMIC DNA]</scope>
    <source>
        <strain>ATCC 51363 / DSM 5348 / JCM 9185 / NBRC 15509 / TH2</strain>
    </source>
</reference>
<comment type="function">
    <text evidence="1">D-aminoacyl-tRNA deacylase with broad substrate specificity. By recycling D-aminoacyl-tRNA to D-amino acids and free tRNA molecules, this enzyme counteracts the toxicity associated with the formation of D-aminoacyl-tRNA entities in vivo.</text>
</comment>
<comment type="catalytic activity">
    <reaction evidence="1">
        <text>a D-aminoacyl-tRNA + H2O = a tRNA + a D-alpha-amino acid + H(+)</text>
        <dbReference type="Rhea" id="RHEA:13953"/>
        <dbReference type="Rhea" id="RHEA-COMP:10123"/>
        <dbReference type="Rhea" id="RHEA-COMP:10124"/>
        <dbReference type="ChEBI" id="CHEBI:15377"/>
        <dbReference type="ChEBI" id="CHEBI:15378"/>
        <dbReference type="ChEBI" id="CHEBI:59871"/>
        <dbReference type="ChEBI" id="CHEBI:78442"/>
        <dbReference type="ChEBI" id="CHEBI:79333"/>
        <dbReference type="EC" id="3.1.1.96"/>
    </reaction>
</comment>
<comment type="catalytic activity">
    <reaction evidence="1">
        <text>glycyl-tRNA(Ala) + H2O = tRNA(Ala) + glycine + H(+)</text>
        <dbReference type="Rhea" id="RHEA:53744"/>
        <dbReference type="Rhea" id="RHEA-COMP:9657"/>
        <dbReference type="Rhea" id="RHEA-COMP:13640"/>
        <dbReference type="ChEBI" id="CHEBI:15377"/>
        <dbReference type="ChEBI" id="CHEBI:15378"/>
        <dbReference type="ChEBI" id="CHEBI:57305"/>
        <dbReference type="ChEBI" id="CHEBI:78442"/>
        <dbReference type="ChEBI" id="CHEBI:78522"/>
        <dbReference type="EC" id="3.1.1.96"/>
    </reaction>
</comment>
<comment type="cofactor">
    <cofactor evidence="1">
        <name>Zn(2+)</name>
        <dbReference type="ChEBI" id="CHEBI:29105"/>
    </cofactor>
    <text evidence="1">Binds 2 Zn(2+) ions per subunit.</text>
</comment>
<comment type="subunit">
    <text evidence="1">Monomer.</text>
</comment>
<comment type="similarity">
    <text evidence="1">Belongs to the DtdA deacylase family.</text>
</comment>
<evidence type="ECO:0000255" key="1">
    <source>
        <dbReference type="HAMAP-Rule" id="MF_00562"/>
    </source>
</evidence>
<accession>A4YEU7</accession>
<dbReference type="EC" id="3.1.1.96" evidence="1"/>
<dbReference type="EMBL" id="CP000682">
    <property type="protein sequence ID" value="ABP94949.1"/>
    <property type="molecule type" value="Genomic_DNA"/>
</dbReference>
<dbReference type="RefSeq" id="WP_012020736.1">
    <property type="nucleotide sequence ID" value="NC_009440.1"/>
</dbReference>
<dbReference type="SMR" id="A4YEU7"/>
<dbReference type="STRING" id="399549.Msed_0774"/>
<dbReference type="GeneID" id="91755234"/>
<dbReference type="KEGG" id="mse:Msed_0774"/>
<dbReference type="eggNOG" id="arCOG01616">
    <property type="taxonomic scope" value="Archaea"/>
</dbReference>
<dbReference type="HOGENOM" id="CLU_056464_1_0_2"/>
<dbReference type="Proteomes" id="UP000000242">
    <property type="component" value="Chromosome"/>
</dbReference>
<dbReference type="GO" id="GO:0051499">
    <property type="term" value="F:D-aminoacyl-tRNA deacylase activity"/>
    <property type="evidence" value="ECO:0007669"/>
    <property type="project" value="UniProtKB-UniRule"/>
</dbReference>
<dbReference type="GO" id="GO:0008270">
    <property type="term" value="F:zinc ion binding"/>
    <property type="evidence" value="ECO:0007669"/>
    <property type="project" value="UniProtKB-UniRule"/>
</dbReference>
<dbReference type="GO" id="GO:0019478">
    <property type="term" value="P:D-amino acid catabolic process"/>
    <property type="evidence" value="ECO:0007669"/>
    <property type="project" value="UniProtKB-UniRule"/>
</dbReference>
<dbReference type="Gene3D" id="3.40.50.10700">
    <property type="entry name" value="AF0625-like"/>
    <property type="match status" value="1"/>
</dbReference>
<dbReference type="Gene3D" id="3.40.630.50">
    <property type="entry name" value="AF0625-like"/>
    <property type="match status" value="1"/>
</dbReference>
<dbReference type="HAMAP" id="MF_00562">
    <property type="entry name" value="Deacylase_DtdA"/>
    <property type="match status" value="1"/>
</dbReference>
<dbReference type="InterPro" id="IPR018033">
    <property type="entry name" value="Deacylase_DtdA_archaea"/>
</dbReference>
<dbReference type="InterPro" id="IPR007508">
    <property type="entry name" value="DtdA"/>
</dbReference>
<dbReference type="NCBIfam" id="NF003070">
    <property type="entry name" value="PRK03995.1-1"/>
    <property type="match status" value="1"/>
</dbReference>
<dbReference type="PANTHER" id="PTHR34667">
    <property type="entry name" value="D-AMINOACYL-TRNA DEACYLASE"/>
    <property type="match status" value="1"/>
</dbReference>
<dbReference type="PANTHER" id="PTHR34667:SF1">
    <property type="entry name" value="D-AMINOACYL-TRNA DEACYLASE"/>
    <property type="match status" value="1"/>
</dbReference>
<dbReference type="Pfam" id="PF04414">
    <property type="entry name" value="tRNA_deacylase"/>
    <property type="match status" value="1"/>
</dbReference>
<dbReference type="PIRSF" id="PIRSF016210">
    <property type="entry name" value="UCP016210"/>
    <property type="match status" value="1"/>
</dbReference>
<dbReference type="SUPFAM" id="SSF142535">
    <property type="entry name" value="AF0625-like"/>
    <property type="match status" value="1"/>
</dbReference>
<keyword id="KW-0378">Hydrolase</keyword>
<keyword id="KW-0479">Metal-binding</keyword>
<keyword id="KW-1185">Reference proteome</keyword>
<keyword id="KW-0862">Zinc</keyword>
<feature type="chain" id="PRO_0000345214" description="D-aminoacyl-tRNA deacylase">
    <location>
        <begin position="1"/>
        <end position="237"/>
    </location>
</feature>
<protein>
    <recommendedName>
        <fullName evidence="1">D-aminoacyl-tRNA deacylase</fullName>
        <ecNumber evidence="1">3.1.1.96</ecNumber>
    </recommendedName>
    <alternativeName>
        <fullName>D-tyrosyl-tRNA(Tyr) deacylase</fullName>
    </alternativeName>
</protein>
<name>DTDA_METS5</name>
<proteinExistence type="inferred from homology"/>
<sequence length="237" mass="26208">MDVSVIISSKDPVGQTVKRLGYSFEEIDEDVTEFSYSKGDSIVMICRHESSTRTPAFTIHHPGNPGKSAMGGKPESLAIANARLLTSIFRSMTRIDANIEKIIEATHHGPTEIPKPITFVEIGSDPEMWNNEKLVGKLVEAVLKGIERMEETDCQNTTLIYGGPHYSKLASTVAQSDCISHIISKHYISELSSNVIVQSIERNITRPRTAVLDSIPRSKRETLTSILSSNNISIELR</sequence>